<gene>
    <name evidence="8" type="primary">ZNF516</name>
    <name evidence="7" type="synonym">KIAA0222</name>
</gene>
<evidence type="ECO:0000250" key="1">
    <source>
        <dbReference type="UniProtKB" id="Q7TSH3"/>
    </source>
</evidence>
<evidence type="ECO:0000255" key="2">
    <source>
        <dbReference type="PROSITE-ProRule" id="PRU00042"/>
    </source>
</evidence>
<evidence type="ECO:0000256" key="3">
    <source>
        <dbReference type="SAM" id="MobiDB-lite"/>
    </source>
</evidence>
<evidence type="ECO:0000269" key="4">
    <source>
    </source>
</evidence>
<evidence type="ECO:0000269" key="5">
    <source>
    </source>
</evidence>
<evidence type="ECO:0000305" key="6"/>
<evidence type="ECO:0000312" key="7">
    <source>
        <dbReference type="EMBL" id="BAA13211.2"/>
    </source>
</evidence>
<evidence type="ECO:0000312" key="8">
    <source>
        <dbReference type="HGNC" id="HGNC:28990"/>
    </source>
</evidence>
<evidence type="ECO:0007744" key="9">
    <source>
    </source>
</evidence>
<accession>Q92618</accession>
<organism>
    <name type="scientific">Homo sapiens</name>
    <name type="common">Human</name>
    <dbReference type="NCBI Taxonomy" id="9606"/>
    <lineage>
        <taxon>Eukaryota</taxon>
        <taxon>Metazoa</taxon>
        <taxon>Chordata</taxon>
        <taxon>Craniata</taxon>
        <taxon>Vertebrata</taxon>
        <taxon>Euteleostomi</taxon>
        <taxon>Mammalia</taxon>
        <taxon>Eutheria</taxon>
        <taxon>Euarchontoglires</taxon>
        <taxon>Primates</taxon>
        <taxon>Haplorrhini</taxon>
        <taxon>Catarrhini</taxon>
        <taxon>Hominidae</taxon>
        <taxon>Homo</taxon>
    </lineage>
</organism>
<comment type="function">
    <text evidence="1 4">Transcriptional regulator that binds to the promoter and activates the transcription of genes promoting brown adipose tissue (BAT) differentiation. Among brown adipose tissue-specific genes, binds the proximal region of the promoter of the UCP1 gene to activate its transcription and thereby regulate thermogenesis (By similarity). May also play a role in the cellular response to replication stress (PubMed:23446422).</text>
</comment>
<comment type="subunit">
    <text evidence="1 5">Interacts with PRDM16; the interaction is direct and may play a role in the transcription of brown adipose tissue-specific genes (PubMed:25578880). Interacts with PWWP2B (By similarity). Interacts with HDAC1; this interaction is enhanced in the presence of PWWP2B (By similarity).</text>
</comment>
<comment type="interaction">
    <interactant intactId="EBI-2799490">
        <id>Q92618</id>
    </interactant>
    <interactant intactId="EBI-908846">
        <id>Q13363</id>
        <label>CTBP1</label>
    </interactant>
    <organismsDiffer>false</organismsDiffer>
    <experiments>16</experiments>
</comment>
<comment type="interaction">
    <interactant intactId="EBI-2799490">
        <id>Q92618</id>
    </interactant>
    <interactant intactId="EBI-741533">
        <id>P56545</id>
        <label>CTBP2</label>
    </interactant>
    <organismsDiffer>false</organismsDiffer>
    <experiments>7</experiments>
</comment>
<comment type="interaction">
    <interactant intactId="EBI-2799490">
        <id>Q92618</id>
    </interactant>
    <interactant intactId="EBI-301834">
        <id>Q13547</id>
        <label>HDAC1</label>
    </interactant>
    <organismsDiffer>false</organismsDiffer>
    <experiments>12</experiments>
</comment>
<comment type="interaction">
    <interactant intactId="EBI-2799490">
        <id>Q92618</id>
    </interactant>
    <interactant intactId="EBI-301821">
        <id>Q92769</id>
        <label>HDAC2</label>
    </interactant>
    <organismsDiffer>false</organismsDiffer>
    <experiments>7</experiments>
</comment>
<comment type="interaction">
    <interactant intactId="EBI-2799490">
        <id>Q92618</id>
    </interactant>
    <interactant intactId="EBI-710124">
        <id>O60341</id>
        <label>KDM1A</label>
    </interactant>
    <organismsDiffer>false</organismsDiffer>
    <experiments>6</experiments>
</comment>
<comment type="interaction">
    <interactant intactId="EBI-2799490">
        <id>Q92618</id>
    </interactant>
    <interactant intactId="EBI-926563">
        <id>Q9UKL0</id>
        <label>RCOR1</label>
    </interactant>
    <organismsDiffer>false</organismsDiffer>
    <experiments>7</experiments>
</comment>
<comment type="subcellular location">
    <subcellularLocation>
        <location evidence="1">Nucleus</location>
    </subcellularLocation>
</comment>
<comment type="similarity">
    <text evidence="6">Belongs to the krueppel C2H2-type zinc-finger protein family.</text>
</comment>
<comment type="sequence caution" evidence="6">
    <conflict type="erroneous initiation">
        <sequence resource="EMBL-CDS" id="BAA13211"/>
    </conflict>
    <text>Extended N-terminus.</text>
</comment>
<proteinExistence type="evidence at protein level"/>
<sequence length="1163" mass="124289">MDRNREAEMELRRGPSPTRAGRGHEVDGDKATCHTCCICGKSFPFQSSLSQHMRKHTGEKPYKCPYCDHRASQKGNLKIHIRSHRTGTLIQGHEPEAGEAPLGEMRASEGLDACASPTKSASACNRLLNGASQADGARVLNGASQADSGRVLLRSSKKGAEGSACAPGEAKAAVQCSFCKSQFERKKDLELHVHQAHKPFKCRLCSYATLREESLLSHIERDHITAQGPGSGEACVENGKPELSPGEFPCEVCGQAFSQTWFLKAHMKKHRGSFDHGCHICGRRFKEPWFLKNHMKAHGPKTGSKNRPKSELDPIATINNVVQEEVIVAGLSLYEVCAKCGNLFTNLDSLNAHNAIHRRVEASRTRAPAEEGAEGPSDTKQFFLQCLNLRPSAAGDSCPGTQAGRRVAELDPVNSYQAWQLATRGKVAEPAEYLKYGAWDEALAGDVAFDKDRREYVLVSQEKRKREQDAPAAQGPPRKRASGPGDPAPAGHLDPRSAARPNRRAAATTGQGKSSECFECGKIFRTYHQMVLHSRVHRRARRERDSDGDRAARARCGSLSEGDSASQPSSPGSACAAADSPGSGLADEAAEDSGEEGAPEPAPGGQPRRCCFSEEVTSTELSSGDQSHKMGDNASERDTGESKAGIAASVSILENSSRETSRRQEQHRFSMDLKMPAFHPKQEVPVPGDGVEFPSSTGAEGQTGHPAEKLSDLHNKEHSGGGKRALAPDLMPLDLSARSTRDDPSNKETASSLQAALVVHPCPYCSHKTYYPEVLWMHKRIWHRVSCNSVAPPWIQPNGYKSIRSNLVFLSRSGRTGPPPALGGKECQPLLLARFTRTQVPGGMPGSKSGSSPLGVVTKAASMPKNKESHSGGPCALWAPGPDGYRQTKPCHGQEPHGAATQGPLAKPRQEASSKPVPAPGGGGFSRSATPTPTVIARAGAQPSANSKPVEKFGVPPAGAGFAPTNKHSAPDSLKAKFSAQPQGPPPAKGEGGAPPLPPREPPSKAAQELRTLATCAAGSRGDAALQAQPGVAGAPPVLHSIKQEPVAEGHEKRLDILNIFKTYIPKDFATLYQGWGVSGPGLEHRGTLRTQARPGEFVCIECGKSFHQPGHLRAHMRAHSVVFESDGPRGSEVHTTSADAPKQGRDHSNTGTVQTVPLRKGT</sequence>
<keyword id="KW-0238">DNA-binding</keyword>
<keyword id="KW-1017">Isopeptide bond</keyword>
<keyword id="KW-0479">Metal-binding</keyword>
<keyword id="KW-0539">Nucleus</keyword>
<keyword id="KW-1267">Proteomics identification</keyword>
<keyword id="KW-1185">Reference proteome</keyword>
<keyword id="KW-0677">Repeat</keyword>
<keyword id="KW-0804">Transcription</keyword>
<keyword id="KW-0805">Transcription regulation</keyword>
<keyword id="KW-0832">Ubl conjugation</keyword>
<keyword id="KW-0862">Zinc</keyword>
<keyword id="KW-0863">Zinc-finger</keyword>
<reference key="1">
    <citation type="journal article" date="1996" name="DNA Res.">
        <title>Prediction of the coding sequences of unidentified human genes. VI. The coding sequences of 80 new genes (KIAA0201-KIAA0280) deduced by analysis of cDNA clones from cell line KG-1 and brain.</title>
        <authorList>
            <person name="Nagase T."/>
            <person name="Seki N."/>
            <person name="Ishikawa K."/>
            <person name="Ohira M."/>
            <person name="Kawarabayasi Y."/>
            <person name="Ohara O."/>
            <person name="Tanaka A."/>
            <person name="Kotani H."/>
            <person name="Miyajima N."/>
            <person name="Nomura N."/>
        </authorList>
    </citation>
    <scope>NUCLEOTIDE SEQUENCE [LARGE SCALE MRNA]</scope>
    <source>
        <tissue>Bone marrow</tissue>
    </source>
</reference>
<reference key="2">
    <citation type="journal article" date="2009" name="Anal. Chem.">
        <title>Lys-N and trypsin cover complementary parts of the phosphoproteome in a refined SCX-based approach.</title>
        <authorList>
            <person name="Gauci S."/>
            <person name="Helbig A.O."/>
            <person name="Slijper M."/>
            <person name="Krijgsveld J."/>
            <person name="Heck A.J."/>
            <person name="Mohammed S."/>
        </authorList>
    </citation>
    <scope>IDENTIFICATION BY MASS SPECTROMETRY [LARGE SCALE ANALYSIS]</scope>
</reference>
<reference key="3">
    <citation type="journal article" date="2013" name="Nature">
        <title>Replication stress links structural and numerical cancer chromosomal instability.</title>
        <authorList>
            <person name="Burrell R.A."/>
            <person name="McClelland S.E."/>
            <person name="Endesfelder D."/>
            <person name="Groth P."/>
            <person name="Weller M.C."/>
            <person name="Shaikh N."/>
            <person name="Domingo E."/>
            <person name="Kanu N."/>
            <person name="Dewhurst S.M."/>
            <person name="Gronroos E."/>
            <person name="Chew S.K."/>
            <person name="Rowan A.J."/>
            <person name="Schenk A."/>
            <person name="Sheffer M."/>
            <person name="Howell M."/>
            <person name="Kschischo M."/>
            <person name="Behrens A."/>
            <person name="Helleday T."/>
            <person name="Bartek J."/>
            <person name="Tomlinson I.P."/>
            <person name="Swanton C."/>
        </authorList>
    </citation>
    <scope>FUNCTION</scope>
</reference>
<reference key="4">
    <citation type="journal article" date="2015" name="Mol. Cell">
        <title>Cold-inducible Zfp516 activates UCP1 transcription to promote browning of white fat and development of brown fat.</title>
        <authorList>
            <person name="Dempersmier J."/>
            <person name="Sambeat A."/>
            <person name="Gulyaeva O."/>
            <person name="Paul S.M."/>
            <person name="Hudak C.S."/>
            <person name="Raposo H.F."/>
            <person name="Kwan H.Y."/>
            <person name="Kang C."/>
            <person name="Wong R.H."/>
            <person name="Sul H.S."/>
        </authorList>
    </citation>
    <scope>INTERACTION WITH PRDM16</scope>
</reference>
<reference key="5">
    <citation type="journal article" date="2017" name="Nat. Struct. Mol. Biol.">
        <title>Site-specific mapping of the human SUMO proteome reveals co-modification with phosphorylation.</title>
        <authorList>
            <person name="Hendriks I.A."/>
            <person name="Lyon D."/>
            <person name="Young C."/>
            <person name="Jensen L.J."/>
            <person name="Vertegaal A.C."/>
            <person name="Nielsen M.L."/>
        </authorList>
    </citation>
    <scope>SUMOYLATION [LARGE SCALE ANALYSIS] AT LYS-643; LYS-681; LYS-1043 AND LYS-1062</scope>
    <scope>IDENTIFICATION BY MASS SPECTROMETRY [LARGE SCALE ANALYSIS]</scope>
</reference>
<feature type="chain" id="PRO_0000047634" description="Zinc finger protein 516">
    <location>
        <begin position="1"/>
        <end position="1163"/>
    </location>
</feature>
<feature type="zinc finger region" description="C2H2-type 1" evidence="2">
    <location>
        <begin position="34"/>
        <end position="56"/>
    </location>
</feature>
<feature type="zinc finger region" description="C2H2-type 2" evidence="2">
    <location>
        <begin position="62"/>
        <end position="84"/>
    </location>
</feature>
<feature type="zinc finger region" description="C2H2-type 3" evidence="2">
    <location>
        <begin position="174"/>
        <end position="197"/>
    </location>
</feature>
<feature type="zinc finger region" description="C2H2-type 4" evidence="2">
    <location>
        <begin position="200"/>
        <end position="223"/>
    </location>
</feature>
<feature type="zinc finger region" description="C2H2-type 5" evidence="2">
    <location>
        <begin position="248"/>
        <end position="270"/>
    </location>
</feature>
<feature type="zinc finger region" description="C2H2-type 6" evidence="2">
    <location>
        <begin position="276"/>
        <end position="298"/>
    </location>
</feature>
<feature type="zinc finger region" description="C2H2-type 7" evidence="2">
    <location>
        <begin position="335"/>
        <end position="357"/>
    </location>
</feature>
<feature type="zinc finger region" description="C2H2-type 8" evidence="2">
    <location>
        <begin position="515"/>
        <end position="537"/>
    </location>
</feature>
<feature type="zinc finger region" description="C2H2-type 9; atypical" evidence="2">
    <location>
        <begin position="760"/>
        <end position="783"/>
    </location>
</feature>
<feature type="zinc finger region" description="C2H2-type 10" evidence="2">
    <location>
        <begin position="1098"/>
        <end position="1120"/>
    </location>
</feature>
<feature type="region of interest" description="Mediates promoter DNA-binding and activation of transcription" evidence="1">
    <location>
        <begin position="1"/>
        <end position="431"/>
    </location>
</feature>
<feature type="region of interest" description="Disordered" evidence="3">
    <location>
        <begin position="1"/>
        <end position="26"/>
    </location>
</feature>
<feature type="region of interest" description="Disordered" evidence="3">
    <location>
        <begin position="460"/>
        <end position="512"/>
    </location>
</feature>
<feature type="region of interest" description="Disordered" evidence="3">
    <location>
        <begin position="533"/>
        <end position="667"/>
    </location>
</feature>
<feature type="region of interest" description="Disordered" evidence="3">
    <location>
        <begin position="679"/>
        <end position="730"/>
    </location>
</feature>
<feature type="region of interest" description="Disordered" evidence="3">
    <location>
        <begin position="838"/>
        <end position="1007"/>
    </location>
</feature>
<feature type="region of interest" description="Disordered" evidence="3">
    <location>
        <begin position="1126"/>
        <end position="1163"/>
    </location>
</feature>
<feature type="compositionally biased region" description="Basic and acidic residues" evidence="3">
    <location>
        <begin position="1"/>
        <end position="13"/>
    </location>
</feature>
<feature type="compositionally biased region" description="Basic and acidic residues" evidence="3">
    <location>
        <begin position="460"/>
        <end position="469"/>
    </location>
</feature>
<feature type="compositionally biased region" description="Low complexity" evidence="3">
    <location>
        <begin position="496"/>
        <end position="507"/>
    </location>
</feature>
<feature type="compositionally biased region" description="Basic and acidic residues" evidence="3">
    <location>
        <begin position="542"/>
        <end position="552"/>
    </location>
</feature>
<feature type="compositionally biased region" description="Polar residues" evidence="3">
    <location>
        <begin position="561"/>
        <end position="572"/>
    </location>
</feature>
<feature type="compositionally biased region" description="Acidic residues" evidence="3">
    <location>
        <begin position="588"/>
        <end position="598"/>
    </location>
</feature>
<feature type="compositionally biased region" description="Polar residues" evidence="3">
    <location>
        <begin position="615"/>
        <end position="625"/>
    </location>
</feature>
<feature type="compositionally biased region" description="Basic and acidic residues" evidence="3">
    <location>
        <begin position="626"/>
        <end position="641"/>
    </location>
</feature>
<feature type="compositionally biased region" description="Basic and acidic residues" evidence="3">
    <location>
        <begin position="656"/>
        <end position="667"/>
    </location>
</feature>
<feature type="compositionally biased region" description="Basic and acidic residues" evidence="3">
    <location>
        <begin position="706"/>
        <end position="720"/>
    </location>
</feature>
<feature type="compositionally biased region" description="Low complexity" evidence="3">
    <location>
        <begin position="840"/>
        <end position="857"/>
    </location>
</feature>
<feature type="cross-link" description="Glycyl lysine isopeptide (Lys-Gly) (interchain with G-Cter in SUMO2)" evidence="9">
    <location>
        <position position="643"/>
    </location>
</feature>
<feature type="cross-link" description="Glycyl lysine isopeptide (Lys-Gly) (interchain with G-Cter in SUMO2)" evidence="9">
    <location>
        <position position="681"/>
    </location>
</feature>
<feature type="cross-link" description="Glycyl lysine isopeptide (Lys-Gly) (interchain with G-Cter in SUMO2)" evidence="9">
    <location>
        <position position="1043"/>
    </location>
</feature>
<feature type="cross-link" description="Glycyl lysine isopeptide (Lys-Gly) (interchain with G-Cter in SUMO2)" evidence="9">
    <location>
        <position position="1062"/>
    </location>
</feature>
<feature type="sequence variant" id="VAR_052852" description="In dbSNP:rs3752097.">
    <original>N</original>
    <variation>S</variation>
    <location>
        <position position="4"/>
    </location>
</feature>
<feature type="sequence variant" id="VAR_052853" description="In dbSNP:rs12961584.">
    <original>G</original>
    <variation>S</variation>
    <location>
        <position position="239"/>
    </location>
</feature>
<protein>
    <recommendedName>
        <fullName evidence="8">Zinc finger protein 516</fullName>
    </recommendedName>
</protein>
<name>ZN516_HUMAN</name>
<dbReference type="EMBL" id="D86975">
    <property type="protein sequence ID" value="BAA13211.2"/>
    <property type="status" value="ALT_INIT"/>
    <property type="molecule type" value="mRNA"/>
</dbReference>
<dbReference type="CCDS" id="CCDS74234.1"/>
<dbReference type="RefSeq" id="NP_055458.1">
    <property type="nucleotide sequence ID" value="NM_014643.4"/>
</dbReference>
<dbReference type="RefSeq" id="XP_011524571.1">
    <property type="nucleotide sequence ID" value="XM_011526269.3"/>
</dbReference>
<dbReference type="RefSeq" id="XP_011524572.1">
    <property type="nucleotide sequence ID" value="XM_011526270.4"/>
</dbReference>
<dbReference type="RefSeq" id="XP_011524573.1">
    <property type="nucleotide sequence ID" value="XM_011526271.2"/>
</dbReference>
<dbReference type="RefSeq" id="XP_011524574.1">
    <property type="nucleotide sequence ID" value="XM_011526272.2"/>
</dbReference>
<dbReference type="RefSeq" id="XP_011524575.1">
    <property type="nucleotide sequence ID" value="XM_011526273.4"/>
</dbReference>
<dbReference type="RefSeq" id="XP_011524576.1">
    <property type="nucleotide sequence ID" value="XM_011526274.4"/>
</dbReference>
<dbReference type="RefSeq" id="XP_011524577.1">
    <property type="nucleotide sequence ID" value="XM_011526275.3"/>
</dbReference>
<dbReference type="RefSeq" id="XP_016881586.1">
    <property type="nucleotide sequence ID" value="XM_017026097.3"/>
</dbReference>
<dbReference type="RefSeq" id="XP_047293906.1">
    <property type="nucleotide sequence ID" value="XM_047437950.1"/>
</dbReference>
<dbReference type="RefSeq" id="XP_047293907.1">
    <property type="nucleotide sequence ID" value="XM_047437951.1"/>
</dbReference>
<dbReference type="RefSeq" id="XP_047293908.1">
    <property type="nucleotide sequence ID" value="XM_047437952.1"/>
</dbReference>
<dbReference type="RefSeq" id="XP_047293909.1">
    <property type="nucleotide sequence ID" value="XM_047437953.1"/>
</dbReference>
<dbReference type="RefSeq" id="XP_047293910.1">
    <property type="nucleotide sequence ID" value="XM_047437954.1"/>
</dbReference>
<dbReference type="RefSeq" id="XP_047293911.1">
    <property type="nucleotide sequence ID" value="XM_047437955.1"/>
</dbReference>
<dbReference type="RefSeq" id="XP_047293912.1">
    <property type="nucleotide sequence ID" value="XM_047437956.1"/>
</dbReference>
<dbReference type="RefSeq" id="XP_054175354.1">
    <property type="nucleotide sequence ID" value="XM_054319379.1"/>
</dbReference>
<dbReference type="RefSeq" id="XP_054175355.1">
    <property type="nucleotide sequence ID" value="XM_054319380.1"/>
</dbReference>
<dbReference type="RefSeq" id="XP_054175356.1">
    <property type="nucleotide sequence ID" value="XM_054319381.1"/>
</dbReference>
<dbReference type="RefSeq" id="XP_054175357.1">
    <property type="nucleotide sequence ID" value="XM_054319382.1"/>
</dbReference>
<dbReference type="RefSeq" id="XP_054175358.1">
    <property type="nucleotide sequence ID" value="XM_054319383.1"/>
</dbReference>
<dbReference type="RefSeq" id="XP_054175359.1">
    <property type="nucleotide sequence ID" value="XM_054319384.1"/>
</dbReference>
<dbReference type="RefSeq" id="XP_054175360.1">
    <property type="nucleotide sequence ID" value="XM_054319385.1"/>
</dbReference>
<dbReference type="RefSeq" id="XP_054175361.1">
    <property type="nucleotide sequence ID" value="XM_054319386.1"/>
</dbReference>
<dbReference type="RefSeq" id="XP_054175362.1">
    <property type="nucleotide sequence ID" value="XM_054319387.1"/>
</dbReference>
<dbReference type="RefSeq" id="XP_054175363.1">
    <property type="nucleotide sequence ID" value="XM_054319388.1"/>
</dbReference>
<dbReference type="RefSeq" id="XP_054175364.1">
    <property type="nucleotide sequence ID" value="XM_054319389.1"/>
</dbReference>
<dbReference type="BioGRID" id="115016">
    <property type="interactions" value="54"/>
</dbReference>
<dbReference type="CORUM" id="Q92618"/>
<dbReference type="FunCoup" id="Q92618">
    <property type="interactions" value="1705"/>
</dbReference>
<dbReference type="IntAct" id="Q92618">
    <property type="interactions" value="39"/>
</dbReference>
<dbReference type="MINT" id="Q92618"/>
<dbReference type="STRING" id="9606.ENSP00000394757"/>
<dbReference type="GlyGen" id="Q92618">
    <property type="glycosylation" value="2 sites, 1 O-linked glycan (1 site)"/>
</dbReference>
<dbReference type="iPTMnet" id="Q92618"/>
<dbReference type="MetOSite" id="Q92618"/>
<dbReference type="PhosphoSitePlus" id="Q92618"/>
<dbReference type="BioMuta" id="ZNF516"/>
<dbReference type="DMDM" id="14548318"/>
<dbReference type="jPOST" id="Q92618"/>
<dbReference type="MassIVE" id="Q92618"/>
<dbReference type="PaxDb" id="9606-ENSP00000394757"/>
<dbReference type="PeptideAtlas" id="Q92618"/>
<dbReference type="ProteomicsDB" id="75371"/>
<dbReference type="Pumba" id="Q92618"/>
<dbReference type="Antibodypedia" id="5767">
    <property type="antibodies" value="67 antibodies from 15 providers"/>
</dbReference>
<dbReference type="DNASU" id="9658"/>
<dbReference type="Ensembl" id="ENST00000443185.7">
    <property type="protein sequence ID" value="ENSP00000394757.2"/>
    <property type="gene ID" value="ENSG00000101493.11"/>
</dbReference>
<dbReference type="GeneID" id="9658"/>
<dbReference type="KEGG" id="hsa:9658"/>
<dbReference type="MANE-Select" id="ENST00000443185.7">
    <property type="protein sequence ID" value="ENSP00000394757.2"/>
    <property type="RefSeq nucleotide sequence ID" value="NM_014643.4"/>
    <property type="RefSeq protein sequence ID" value="NP_055458.1"/>
</dbReference>
<dbReference type="UCSC" id="uc032hhr.2">
    <property type="organism name" value="human"/>
</dbReference>
<dbReference type="AGR" id="HGNC:28990"/>
<dbReference type="CTD" id="9658"/>
<dbReference type="DisGeNET" id="9658"/>
<dbReference type="GeneCards" id="ZNF516"/>
<dbReference type="HGNC" id="HGNC:28990">
    <property type="gene designation" value="ZNF516"/>
</dbReference>
<dbReference type="HPA" id="ENSG00000101493">
    <property type="expression patterns" value="Low tissue specificity"/>
</dbReference>
<dbReference type="MIM" id="615114">
    <property type="type" value="gene"/>
</dbReference>
<dbReference type="neXtProt" id="NX_Q92618"/>
<dbReference type="OpenTargets" id="ENSG00000101493"/>
<dbReference type="PharmGKB" id="PA134992707"/>
<dbReference type="VEuPathDB" id="HostDB:ENSG00000101493"/>
<dbReference type="eggNOG" id="KOG1721">
    <property type="taxonomic scope" value="Eukaryota"/>
</dbReference>
<dbReference type="GeneTree" id="ENSGT00940000160839"/>
<dbReference type="HOGENOM" id="CLU_009481_0_0_1"/>
<dbReference type="InParanoid" id="Q92618"/>
<dbReference type="OMA" id="YQGWGVG"/>
<dbReference type="OrthoDB" id="8852887at2759"/>
<dbReference type="PAN-GO" id="Q92618">
    <property type="GO annotations" value="4 GO annotations based on evolutionary models"/>
</dbReference>
<dbReference type="PhylomeDB" id="Q92618"/>
<dbReference type="TreeFam" id="TF332241"/>
<dbReference type="PathwayCommons" id="Q92618"/>
<dbReference type="SignaLink" id="Q92618"/>
<dbReference type="BioGRID-ORCS" id="9658">
    <property type="hits" value="9 hits in 406 CRISPR screens"/>
</dbReference>
<dbReference type="ChiTaRS" id="ZNF516">
    <property type="organism name" value="human"/>
</dbReference>
<dbReference type="GenomeRNAi" id="9658"/>
<dbReference type="Pharos" id="Q92618">
    <property type="development level" value="Tbio"/>
</dbReference>
<dbReference type="PRO" id="PR:Q92618"/>
<dbReference type="Proteomes" id="UP000005640">
    <property type="component" value="Chromosome 18"/>
</dbReference>
<dbReference type="RNAct" id="Q92618">
    <property type="molecule type" value="protein"/>
</dbReference>
<dbReference type="Bgee" id="ENSG00000101493">
    <property type="expression patterns" value="Expressed in stromal cell of endometrium and 157 other cell types or tissues"/>
</dbReference>
<dbReference type="ExpressionAtlas" id="Q92618">
    <property type="expression patterns" value="baseline and differential"/>
</dbReference>
<dbReference type="GO" id="GO:0005634">
    <property type="term" value="C:nucleus"/>
    <property type="evidence" value="ECO:0000250"/>
    <property type="project" value="UniProtKB"/>
</dbReference>
<dbReference type="GO" id="GO:0000987">
    <property type="term" value="F:cis-regulatory region sequence-specific DNA binding"/>
    <property type="evidence" value="ECO:0000250"/>
    <property type="project" value="UniProtKB"/>
</dbReference>
<dbReference type="GO" id="GO:0000981">
    <property type="term" value="F:DNA-binding transcription factor activity, RNA polymerase II-specific"/>
    <property type="evidence" value="ECO:0000318"/>
    <property type="project" value="GO_Central"/>
</dbReference>
<dbReference type="GO" id="GO:0140297">
    <property type="term" value="F:DNA-binding transcription factor binding"/>
    <property type="evidence" value="ECO:0007669"/>
    <property type="project" value="Ensembl"/>
</dbReference>
<dbReference type="GO" id="GO:0000978">
    <property type="term" value="F:RNA polymerase II cis-regulatory region sequence-specific DNA binding"/>
    <property type="evidence" value="ECO:0000318"/>
    <property type="project" value="GO_Central"/>
</dbReference>
<dbReference type="GO" id="GO:0008270">
    <property type="term" value="F:zinc ion binding"/>
    <property type="evidence" value="ECO:0007669"/>
    <property type="project" value="UniProtKB-KW"/>
</dbReference>
<dbReference type="GO" id="GO:0060612">
    <property type="term" value="P:adipose tissue development"/>
    <property type="evidence" value="ECO:0000250"/>
    <property type="project" value="UniProtKB"/>
</dbReference>
<dbReference type="GO" id="GO:0050873">
    <property type="term" value="P:brown fat cell differentiation"/>
    <property type="evidence" value="ECO:0000250"/>
    <property type="project" value="UniProtKB"/>
</dbReference>
<dbReference type="GO" id="GO:0120162">
    <property type="term" value="P:positive regulation of cold-induced thermogenesis"/>
    <property type="evidence" value="ECO:0000250"/>
    <property type="project" value="YuBioLab"/>
</dbReference>
<dbReference type="GO" id="GO:0045893">
    <property type="term" value="P:positive regulation of DNA-templated transcription"/>
    <property type="evidence" value="ECO:0000250"/>
    <property type="project" value="UniProtKB"/>
</dbReference>
<dbReference type="GO" id="GO:0006355">
    <property type="term" value="P:regulation of DNA-templated transcription"/>
    <property type="evidence" value="ECO:0000318"/>
    <property type="project" value="GO_Central"/>
</dbReference>
<dbReference type="GO" id="GO:0009409">
    <property type="term" value="P:response to cold"/>
    <property type="evidence" value="ECO:0007669"/>
    <property type="project" value="Ensembl"/>
</dbReference>
<dbReference type="FunFam" id="3.30.160.60:FF:000075">
    <property type="entry name" value="Putative zinc finger protein 536"/>
    <property type="match status" value="1"/>
</dbReference>
<dbReference type="FunFam" id="3.30.160.60:FF:000652">
    <property type="entry name" value="Zinc finger protein 516"/>
    <property type="match status" value="1"/>
</dbReference>
<dbReference type="FunFam" id="3.30.160.60:FF:001476">
    <property type="entry name" value="Zinc finger protein 516"/>
    <property type="match status" value="1"/>
</dbReference>
<dbReference type="FunFam" id="3.30.160.60:FF:001716">
    <property type="entry name" value="Zinc finger protein 516"/>
    <property type="match status" value="1"/>
</dbReference>
<dbReference type="FunFam" id="3.30.160.60:FF:002223">
    <property type="entry name" value="zinc finger protein 516 isoform X3"/>
    <property type="match status" value="1"/>
</dbReference>
<dbReference type="Gene3D" id="3.30.160.60">
    <property type="entry name" value="Classic Zinc Finger"/>
    <property type="match status" value="5"/>
</dbReference>
<dbReference type="InterPro" id="IPR051967">
    <property type="entry name" value="Krueppel_C2H2-ZF"/>
</dbReference>
<dbReference type="InterPro" id="IPR036236">
    <property type="entry name" value="Znf_C2H2_sf"/>
</dbReference>
<dbReference type="InterPro" id="IPR013087">
    <property type="entry name" value="Znf_C2H2_type"/>
</dbReference>
<dbReference type="PANTHER" id="PTHR45925">
    <property type="entry name" value="ZINC FINGER PROTEIN"/>
    <property type="match status" value="1"/>
</dbReference>
<dbReference type="PANTHER" id="PTHR45925:SF3">
    <property type="entry name" value="ZINC FINGER PROTEIN 516"/>
    <property type="match status" value="1"/>
</dbReference>
<dbReference type="Pfam" id="PF00096">
    <property type="entry name" value="zf-C2H2"/>
    <property type="match status" value="5"/>
</dbReference>
<dbReference type="SMART" id="SM00355">
    <property type="entry name" value="ZnF_C2H2"/>
    <property type="match status" value="10"/>
</dbReference>
<dbReference type="SUPFAM" id="SSF57667">
    <property type="entry name" value="beta-beta-alpha zinc fingers"/>
    <property type="match status" value="4"/>
</dbReference>
<dbReference type="PROSITE" id="PS00028">
    <property type="entry name" value="ZINC_FINGER_C2H2_1"/>
    <property type="match status" value="7"/>
</dbReference>
<dbReference type="PROSITE" id="PS50157">
    <property type="entry name" value="ZINC_FINGER_C2H2_2"/>
    <property type="match status" value="7"/>
</dbReference>